<protein>
    <recommendedName>
        <fullName>Probable ADP-ribosylation factor-binding protein C25H2.16c</fullName>
    </recommendedName>
</protein>
<gene>
    <name type="ORF">SPBC25H2.16c</name>
</gene>
<evidence type="ECO:0000250" key="1"/>
<evidence type="ECO:0000255" key="2">
    <source>
        <dbReference type="PROSITE-ProRule" id="PRU00093"/>
    </source>
</evidence>
<evidence type="ECO:0000255" key="3">
    <source>
        <dbReference type="PROSITE-ProRule" id="PRU00218"/>
    </source>
</evidence>
<evidence type="ECO:0000255" key="4">
    <source>
        <dbReference type="PROSITE-ProRule" id="PRU00373"/>
    </source>
</evidence>
<evidence type="ECO:0000269" key="5">
    <source>
    </source>
</evidence>
<evidence type="ECO:0000269" key="6">
    <source>
    </source>
</evidence>
<evidence type="ECO:0000305" key="7"/>
<keyword id="KW-0333">Golgi apparatus</keyword>
<keyword id="KW-0597">Phosphoprotein</keyword>
<keyword id="KW-0653">Protein transport</keyword>
<keyword id="KW-1185">Reference proteome</keyword>
<keyword id="KW-0813">Transport</keyword>
<sequence>MSSAKRRLYSLIQNATEPYAFEPDLAVNLDIADLINQTGGNLPREAAFAIVRKVNDRNPTVAYLALNLLDICVKNCGYAFRLQIASKEFLNELVRRFPERPPSRLNKIQVMILSLIEEWRKTICRVDRYKEDLGFIRDMHRLLSYKGYTFPEIDKENLAVLSQKSVLKTAEELEKEDREAMSAKLQELIRRGTPADLAEANKLMKVMAGYDTEQKQKYKEHVLVDLEKVKRKAALFGEMLNEVSESDKLASGDLYDELAYSLKAAQRKVDKILEEMSPEDDSYVTVSDLKSLIASLLTQYDHLLEGDFSSARTVAADNNSLLQATTESAKSNSKTSANASNTQSAMDLLIDLDIGSDAQSPSLPASSSQMPTSSFNMESLSQSLLGTVEAPAEVGAISLTESFNSPVSNSSPNVPINNFTSTCAFENSHLNFQITPKSKTRDQVVLLATYTNLSPYDTVENLQSFIAVPKKYNLVLQPQSGTNLSPLQKDGIYQEMIVTKLLDVTELPVRFKLTYKVNGRSQEYTGQSSIRLL</sequence>
<dbReference type="EMBL" id="CU329671">
    <property type="protein sequence ID" value="CAB08775.1"/>
    <property type="molecule type" value="Genomic_DNA"/>
</dbReference>
<dbReference type="PIR" id="T40011">
    <property type="entry name" value="T40011"/>
</dbReference>
<dbReference type="SMR" id="P87157"/>
<dbReference type="BioGRID" id="277097">
    <property type="interactions" value="9"/>
</dbReference>
<dbReference type="FunCoup" id="P87157">
    <property type="interactions" value="159"/>
</dbReference>
<dbReference type="STRING" id="284812.P87157"/>
<dbReference type="iPTMnet" id="P87157"/>
<dbReference type="PaxDb" id="4896-SPBC25H2.16c.1"/>
<dbReference type="EnsemblFungi" id="SPBC25H2.16c.1">
    <property type="protein sequence ID" value="SPBC25H2.16c.1:pep"/>
    <property type="gene ID" value="SPBC25H2.16c"/>
</dbReference>
<dbReference type="KEGG" id="spo:2540570"/>
<dbReference type="PomBase" id="SPBC25H2.16c"/>
<dbReference type="VEuPathDB" id="FungiDB:SPBC25H2.16c"/>
<dbReference type="eggNOG" id="KOG1087">
    <property type="taxonomic scope" value="Eukaryota"/>
</dbReference>
<dbReference type="HOGENOM" id="CLU_017092_0_0_1"/>
<dbReference type="InParanoid" id="P87157"/>
<dbReference type="OMA" id="VNDRNPT"/>
<dbReference type="PhylomeDB" id="P87157"/>
<dbReference type="PRO" id="PR:P87157"/>
<dbReference type="Proteomes" id="UP000002485">
    <property type="component" value="Chromosome II"/>
</dbReference>
<dbReference type="GO" id="GO:0005829">
    <property type="term" value="C:cytosol"/>
    <property type="evidence" value="ECO:0007669"/>
    <property type="project" value="GOC"/>
</dbReference>
<dbReference type="GO" id="GO:0005794">
    <property type="term" value="C:Golgi apparatus"/>
    <property type="evidence" value="ECO:0007005"/>
    <property type="project" value="PomBase"/>
</dbReference>
<dbReference type="GO" id="GO:0005802">
    <property type="term" value="C:trans-Golgi network"/>
    <property type="evidence" value="ECO:0000318"/>
    <property type="project" value="GO_Central"/>
</dbReference>
<dbReference type="GO" id="GO:0032588">
    <property type="term" value="C:trans-Golgi network membrane"/>
    <property type="evidence" value="ECO:0000269"/>
    <property type="project" value="PomBase"/>
</dbReference>
<dbReference type="GO" id="GO:0035091">
    <property type="term" value="F:phosphatidylinositol binding"/>
    <property type="evidence" value="ECO:0007669"/>
    <property type="project" value="InterPro"/>
</dbReference>
<dbReference type="GO" id="GO:0043130">
    <property type="term" value="F:ubiquitin binding"/>
    <property type="evidence" value="ECO:0000318"/>
    <property type="project" value="GO_Central"/>
</dbReference>
<dbReference type="GO" id="GO:0006895">
    <property type="term" value="P:Golgi to endosome transport"/>
    <property type="evidence" value="ECO:0000315"/>
    <property type="project" value="PomBase"/>
</dbReference>
<dbReference type="GO" id="GO:0006896">
    <property type="term" value="P:Golgi to vacuole transport"/>
    <property type="evidence" value="ECO:0000315"/>
    <property type="project" value="PomBase"/>
</dbReference>
<dbReference type="GO" id="GO:0043328">
    <property type="term" value="P:protein transport to vacuole involved in ubiquitin-dependent protein catabolic process via the multivesicular body sorting pathway"/>
    <property type="evidence" value="ECO:0000318"/>
    <property type="project" value="GO_Central"/>
</dbReference>
<dbReference type="CDD" id="cd14235">
    <property type="entry name" value="GAT_GGA_fungi"/>
    <property type="match status" value="1"/>
</dbReference>
<dbReference type="CDD" id="cd16998">
    <property type="entry name" value="VHS_GGA_fungi"/>
    <property type="match status" value="1"/>
</dbReference>
<dbReference type="FunFam" id="1.25.40.90:FF:000008">
    <property type="entry name" value="VHS domain protein"/>
    <property type="match status" value="1"/>
</dbReference>
<dbReference type="FunFam" id="1.20.5.170:FF:000024">
    <property type="entry name" value="VHS domain-containing protein"/>
    <property type="match status" value="1"/>
</dbReference>
<dbReference type="Gene3D" id="1.20.5.170">
    <property type="match status" value="1"/>
</dbReference>
<dbReference type="Gene3D" id="1.20.58.160">
    <property type="match status" value="1"/>
</dbReference>
<dbReference type="Gene3D" id="1.25.40.90">
    <property type="match status" value="1"/>
</dbReference>
<dbReference type="Gene3D" id="2.60.40.1230">
    <property type="match status" value="1"/>
</dbReference>
<dbReference type="InterPro" id="IPR052653">
    <property type="entry name" value="ARF-binding"/>
</dbReference>
<dbReference type="InterPro" id="IPR008152">
    <property type="entry name" value="Clathrin_a/b/g-adaptin_app_Ig"/>
</dbReference>
<dbReference type="InterPro" id="IPR013041">
    <property type="entry name" value="Clathrin_app_Ig-like_sf"/>
</dbReference>
<dbReference type="InterPro" id="IPR008942">
    <property type="entry name" value="ENTH_VHS"/>
</dbReference>
<dbReference type="InterPro" id="IPR008153">
    <property type="entry name" value="GAE_dom"/>
</dbReference>
<dbReference type="InterPro" id="IPR004152">
    <property type="entry name" value="GAT_dom"/>
</dbReference>
<dbReference type="InterPro" id="IPR038425">
    <property type="entry name" value="GAT_sf"/>
</dbReference>
<dbReference type="InterPro" id="IPR002014">
    <property type="entry name" value="VHS_dom"/>
</dbReference>
<dbReference type="PANTHER" id="PTHR47180">
    <property type="entry name" value="ADP-RIBOSYLATION FACTOR-BINDING PROTEIN GGA1-RELATED"/>
    <property type="match status" value="1"/>
</dbReference>
<dbReference type="PANTHER" id="PTHR47180:SF1">
    <property type="entry name" value="ADP-RIBOSYLATION FACTOR-BINDING PROTEIN GGA1-RELATED"/>
    <property type="match status" value="1"/>
</dbReference>
<dbReference type="Pfam" id="PF02883">
    <property type="entry name" value="Alpha_adaptinC2"/>
    <property type="match status" value="1"/>
</dbReference>
<dbReference type="Pfam" id="PF03127">
    <property type="entry name" value="GAT"/>
    <property type="match status" value="1"/>
</dbReference>
<dbReference type="Pfam" id="PF00790">
    <property type="entry name" value="VHS"/>
    <property type="match status" value="1"/>
</dbReference>
<dbReference type="SMART" id="SM00809">
    <property type="entry name" value="Alpha_adaptinC2"/>
    <property type="match status" value="1"/>
</dbReference>
<dbReference type="SMART" id="SM00288">
    <property type="entry name" value="VHS"/>
    <property type="match status" value="1"/>
</dbReference>
<dbReference type="SUPFAM" id="SSF49348">
    <property type="entry name" value="Clathrin adaptor appendage domain"/>
    <property type="match status" value="1"/>
</dbReference>
<dbReference type="SUPFAM" id="SSF48464">
    <property type="entry name" value="ENTH/VHS domain"/>
    <property type="match status" value="1"/>
</dbReference>
<dbReference type="SUPFAM" id="SSF89009">
    <property type="entry name" value="GAT-like domain"/>
    <property type="match status" value="1"/>
</dbReference>
<dbReference type="PROSITE" id="PS50180">
    <property type="entry name" value="GAE"/>
    <property type="match status" value="1"/>
</dbReference>
<dbReference type="PROSITE" id="PS50909">
    <property type="entry name" value="GAT"/>
    <property type="match status" value="1"/>
</dbReference>
<dbReference type="PROSITE" id="PS50179">
    <property type="entry name" value="VHS"/>
    <property type="match status" value="1"/>
</dbReference>
<name>YB0G_SCHPO</name>
<organism>
    <name type="scientific">Schizosaccharomyces pombe (strain 972 / ATCC 24843)</name>
    <name type="common">Fission yeast</name>
    <dbReference type="NCBI Taxonomy" id="284812"/>
    <lineage>
        <taxon>Eukaryota</taxon>
        <taxon>Fungi</taxon>
        <taxon>Dikarya</taxon>
        <taxon>Ascomycota</taxon>
        <taxon>Taphrinomycotina</taxon>
        <taxon>Schizosaccharomycetes</taxon>
        <taxon>Schizosaccharomycetales</taxon>
        <taxon>Schizosaccharomycetaceae</taxon>
        <taxon>Schizosaccharomyces</taxon>
    </lineage>
</organism>
<reference key="1">
    <citation type="journal article" date="2002" name="Nature">
        <title>The genome sequence of Schizosaccharomyces pombe.</title>
        <authorList>
            <person name="Wood V."/>
            <person name="Gwilliam R."/>
            <person name="Rajandream M.A."/>
            <person name="Lyne M.H."/>
            <person name="Lyne R."/>
            <person name="Stewart A."/>
            <person name="Sgouros J.G."/>
            <person name="Peat N."/>
            <person name="Hayles J."/>
            <person name="Baker S.G."/>
            <person name="Basham D."/>
            <person name="Bowman S."/>
            <person name="Brooks K."/>
            <person name="Brown D."/>
            <person name="Brown S."/>
            <person name="Chillingworth T."/>
            <person name="Churcher C.M."/>
            <person name="Collins M."/>
            <person name="Connor R."/>
            <person name="Cronin A."/>
            <person name="Davis P."/>
            <person name="Feltwell T."/>
            <person name="Fraser A."/>
            <person name="Gentles S."/>
            <person name="Goble A."/>
            <person name="Hamlin N."/>
            <person name="Harris D.E."/>
            <person name="Hidalgo J."/>
            <person name="Hodgson G."/>
            <person name="Holroyd S."/>
            <person name="Hornsby T."/>
            <person name="Howarth S."/>
            <person name="Huckle E.J."/>
            <person name="Hunt S."/>
            <person name="Jagels K."/>
            <person name="James K.D."/>
            <person name="Jones L."/>
            <person name="Jones M."/>
            <person name="Leather S."/>
            <person name="McDonald S."/>
            <person name="McLean J."/>
            <person name="Mooney P."/>
            <person name="Moule S."/>
            <person name="Mungall K.L."/>
            <person name="Murphy L.D."/>
            <person name="Niblett D."/>
            <person name="Odell C."/>
            <person name="Oliver K."/>
            <person name="O'Neil S."/>
            <person name="Pearson D."/>
            <person name="Quail M.A."/>
            <person name="Rabbinowitsch E."/>
            <person name="Rutherford K.M."/>
            <person name="Rutter S."/>
            <person name="Saunders D."/>
            <person name="Seeger K."/>
            <person name="Sharp S."/>
            <person name="Skelton J."/>
            <person name="Simmonds M.N."/>
            <person name="Squares R."/>
            <person name="Squares S."/>
            <person name="Stevens K."/>
            <person name="Taylor K."/>
            <person name="Taylor R.G."/>
            <person name="Tivey A."/>
            <person name="Walsh S.V."/>
            <person name="Warren T."/>
            <person name="Whitehead S."/>
            <person name="Woodward J.R."/>
            <person name="Volckaert G."/>
            <person name="Aert R."/>
            <person name="Robben J."/>
            <person name="Grymonprez B."/>
            <person name="Weltjens I."/>
            <person name="Vanstreels E."/>
            <person name="Rieger M."/>
            <person name="Schaefer M."/>
            <person name="Mueller-Auer S."/>
            <person name="Gabel C."/>
            <person name="Fuchs M."/>
            <person name="Duesterhoeft A."/>
            <person name="Fritzc C."/>
            <person name="Holzer E."/>
            <person name="Moestl D."/>
            <person name="Hilbert H."/>
            <person name="Borzym K."/>
            <person name="Langer I."/>
            <person name="Beck A."/>
            <person name="Lehrach H."/>
            <person name="Reinhardt R."/>
            <person name="Pohl T.M."/>
            <person name="Eger P."/>
            <person name="Zimmermann W."/>
            <person name="Wedler H."/>
            <person name="Wambutt R."/>
            <person name="Purnelle B."/>
            <person name="Goffeau A."/>
            <person name="Cadieu E."/>
            <person name="Dreano S."/>
            <person name="Gloux S."/>
            <person name="Lelaure V."/>
            <person name="Mottier S."/>
            <person name="Galibert F."/>
            <person name="Aves S.J."/>
            <person name="Xiang Z."/>
            <person name="Hunt C."/>
            <person name="Moore K."/>
            <person name="Hurst S.M."/>
            <person name="Lucas M."/>
            <person name="Rochet M."/>
            <person name="Gaillardin C."/>
            <person name="Tallada V.A."/>
            <person name="Garzon A."/>
            <person name="Thode G."/>
            <person name="Daga R.R."/>
            <person name="Cruzado L."/>
            <person name="Jimenez J."/>
            <person name="Sanchez M."/>
            <person name="del Rey F."/>
            <person name="Benito J."/>
            <person name="Dominguez A."/>
            <person name="Revuelta J.L."/>
            <person name="Moreno S."/>
            <person name="Armstrong J."/>
            <person name="Forsburg S.L."/>
            <person name="Cerutti L."/>
            <person name="Lowe T."/>
            <person name="McCombie W.R."/>
            <person name="Paulsen I."/>
            <person name="Potashkin J."/>
            <person name="Shpakovski G.V."/>
            <person name="Ussery D."/>
            <person name="Barrell B.G."/>
            <person name="Nurse P."/>
        </authorList>
    </citation>
    <scope>NUCLEOTIDE SEQUENCE [LARGE SCALE GENOMIC DNA]</scope>
    <source>
        <strain>972 / ATCC 24843</strain>
    </source>
</reference>
<reference key="2">
    <citation type="journal article" date="2006" name="Nat. Biotechnol.">
        <title>ORFeome cloning and global analysis of protein localization in the fission yeast Schizosaccharomyces pombe.</title>
        <authorList>
            <person name="Matsuyama A."/>
            <person name="Arai R."/>
            <person name="Yashiroda Y."/>
            <person name="Shirai A."/>
            <person name="Kamata A."/>
            <person name="Sekido S."/>
            <person name="Kobayashi Y."/>
            <person name="Hashimoto A."/>
            <person name="Hamamoto M."/>
            <person name="Hiraoka Y."/>
            <person name="Horinouchi S."/>
            <person name="Yoshida M."/>
        </authorList>
    </citation>
    <scope>SUBCELLULAR LOCATION [LARGE SCALE ANALYSIS]</scope>
</reference>
<reference key="3">
    <citation type="journal article" date="2008" name="J. Proteome Res.">
        <title>Phosphoproteome analysis of fission yeast.</title>
        <authorList>
            <person name="Wilson-Grady J.T."/>
            <person name="Villen J."/>
            <person name="Gygi S.P."/>
        </authorList>
    </citation>
    <scope>PHOSPHORYLATION [LARGE SCALE ANALYSIS] AT SER-320</scope>
    <scope>IDENTIFICATION BY MASS SPECTROMETRY</scope>
</reference>
<feature type="chain" id="PRO_0000353801" description="Probable ADP-ribosylation factor-binding protein C25H2.16c">
    <location>
        <begin position="1"/>
        <end position="533"/>
    </location>
</feature>
<feature type="domain" description="VHS" evidence="3">
    <location>
        <begin position="15"/>
        <end position="151"/>
    </location>
</feature>
<feature type="domain" description="GAT" evidence="4">
    <location>
        <begin position="178"/>
        <end position="305"/>
    </location>
</feature>
<feature type="domain" description="GAE" evidence="2">
    <location>
        <begin position="417"/>
        <end position="532"/>
    </location>
</feature>
<feature type="modified residue" description="Phosphoserine" evidence="6">
    <location>
        <position position="320"/>
    </location>
</feature>
<accession>P87157</accession>
<proteinExistence type="evidence at protein level"/>
<comment type="function">
    <text evidence="1">May play a role in the regulation of membrane traffic through the trans-Golgi network.</text>
</comment>
<comment type="subcellular location">
    <subcellularLocation>
        <location evidence="5">Golgi apparatus</location>
        <location evidence="5">trans-Golgi network</location>
    </subcellularLocation>
</comment>
<comment type="similarity">
    <text evidence="7">Belongs to the GGA protein family.</text>
</comment>